<gene>
    <name type="primary">Sub1</name>
    <name type="synonym">Pc4</name>
    <name type="synonym">Rpo2tc1</name>
</gene>
<dbReference type="EMBL" id="BC088346">
    <property type="protein sequence ID" value="AAH88346.1"/>
    <property type="molecule type" value="mRNA"/>
</dbReference>
<dbReference type="EMBL" id="K02816">
    <property type="protein sequence ID" value="AAA41758.1"/>
    <property type="molecule type" value="mRNA"/>
</dbReference>
<dbReference type="PIR" id="A23063">
    <property type="entry name" value="A23063"/>
</dbReference>
<dbReference type="RefSeq" id="NP_001009618.1">
    <property type="nucleotide sequence ID" value="NM_001009618.1"/>
</dbReference>
<dbReference type="RefSeq" id="XP_006232105.1">
    <property type="nucleotide sequence ID" value="XM_006232043.5"/>
</dbReference>
<dbReference type="RefSeq" id="XP_038957603.1">
    <property type="nucleotide sequence ID" value="XM_039101675.2"/>
</dbReference>
<dbReference type="RefSeq" id="XP_038957604.1">
    <property type="nucleotide sequence ID" value="XM_039101676.2"/>
</dbReference>
<dbReference type="RefSeq" id="XP_038957605.1">
    <property type="nucleotide sequence ID" value="XM_039101677.2"/>
</dbReference>
<dbReference type="RefSeq" id="XP_063137342.1">
    <property type="nucleotide sequence ID" value="XM_063281272.1"/>
</dbReference>
<dbReference type="SMR" id="Q63396"/>
<dbReference type="BioGRID" id="251393">
    <property type="interactions" value="2"/>
</dbReference>
<dbReference type="FunCoup" id="Q63396">
    <property type="interactions" value="2840"/>
</dbReference>
<dbReference type="IntAct" id="Q63396">
    <property type="interactions" value="2"/>
</dbReference>
<dbReference type="MINT" id="Q63396"/>
<dbReference type="STRING" id="10116.ENSRNOP00000067467"/>
<dbReference type="iPTMnet" id="Q63396"/>
<dbReference type="PhosphoSitePlus" id="Q63396"/>
<dbReference type="jPOST" id="Q63396"/>
<dbReference type="PaxDb" id="10116-ENSRNOP00000067467"/>
<dbReference type="Ensembl" id="ENSRNOT00000113169.1">
    <property type="protein sequence ID" value="ENSRNOP00000092370.1"/>
    <property type="gene ID" value="ENSRNOG00000067555.1"/>
</dbReference>
<dbReference type="GeneID" id="192269"/>
<dbReference type="KEGG" id="rno:192269"/>
<dbReference type="AGR" id="RGD:621582"/>
<dbReference type="CTD" id="10923"/>
<dbReference type="RGD" id="621582">
    <property type="gene designation" value="Sub1"/>
</dbReference>
<dbReference type="VEuPathDB" id="HostDB:ENSRNOG00000050563"/>
<dbReference type="eggNOG" id="KOG2712">
    <property type="taxonomic scope" value="Eukaryota"/>
</dbReference>
<dbReference type="GeneTree" id="ENSGT00390000008802"/>
<dbReference type="HOGENOM" id="CLU_104273_1_1_1"/>
<dbReference type="InParanoid" id="Q63396"/>
<dbReference type="PhylomeDB" id="Q63396"/>
<dbReference type="TreeFam" id="TF313859"/>
<dbReference type="PRO" id="PR:Q63396"/>
<dbReference type="Proteomes" id="UP000002494">
    <property type="component" value="Chromosome 2"/>
</dbReference>
<dbReference type="Bgee" id="ENSRNOG00000050563">
    <property type="expression patterns" value="Expressed in Ammon's horn and 20 other cell types or tissues"/>
</dbReference>
<dbReference type="GO" id="GO:0005634">
    <property type="term" value="C:nucleus"/>
    <property type="evidence" value="ECO:0000318"/>
    <property type="project" value="GO_Central"/>
</dbReference>
<dbReference type="GO" id="GO:0005667">
    <property type="term" value="C:transcription regulator complex"/>
    <property type="evidence" value="ECO:0000266"/>
    <property type="project" value="RGD"/>
</dbReference>
<dbReference type="GO" id="GO:0003678">
    <property type="term" value="F:DNA helicase activity"/>
    <property type="evidence" value="ECO:0000266"/>
    <property type="project" value="RGD"/>
</dbReference>
<dbReference type="GO" id="GO:0140297">
    <property type="term" value="F:DNA-binding transcription factor binding"/>
    <property type="evidence" value="ECO:0000266"/>
    <property type="project" value="RGD"/>
</dbReference>
<dbReference type="GO" id="GO:0003690">
    <property type="term" value="F:double-stranded DNA binding"/>
    <property type="evidence" value="ECO:0000266"/>
    <property type="project" value="RGD"/>
</dbReference>
<dbReference type="GO" id="GO:0042802">
    <property type="term" value="F:identical protein binding"/>
    <property type="evidence" value="ECO:0000266"/>
    <property type="project" value="RGD"/>
</dbReference>
<dbReference type="GO" id="GO:0000978">
    <property type="term" value="F:RNA polymerase II cis-regulatory region sequence-specific DNA binding"/>
    <property type="evidence" value="ECO:0000266"/>
    <property type="project" value="RGD"/>
</dbReference>
<dbReference type="GO" id="GO:0003697">
    <property type="term" value="F:single-stranded DNA binding"/>
    <property type="evidence" value="ECO:0000266"/>
    <property type="project" value="RGD"/>
</dbReference>
<dbReference type="GO" id="GO:0003713">
    <property type="term" value="F:transcription coactivator activity"/>
    <property type="evidence" value="ECO:0000266"/>
    <property type="project" value="RGD"/>
</dbReference>
<dbReference type="GO" id="GO:0051053">
    <property type="term" value="P:negative regulation of DNA metabolic process"/>
    <property type="evidence" value="ECO:0000266"/>
    <property type="project" value="RGD"/>
</dbReference>
<dbReference type="GO" id="GO:0060261">
    <property type="term" value="P:positive regulation of transcription initiation by RNA polymerase II"/>
    <property type="evidence" value="ECO:0007669"/>
    <property type="project" value="InterPro"/>
</dbReference>
<dbReference type="GO" id="GO:0051260">
    <property type="term" value="P:protein homooligomerization"/>
    <property type="evidence" value="ECO:0000266"/>
    <property type="project" value="RGD"/>
</dbReference>
<dbReference type="GO" id="GO:0006357">
    <property type="term" value="P:regulation of transcription by RNA polymerase II"/>
    <property type="evidence" value="ECO:0000266"/>
    <property type="project" value="RGD"/>
</dbReference>
<dbReference type="GO" id="GO:0001111">
    <property type="term" value="P:RNA polymerase II promoter clearance"/>
    <property type="evidence" value="ECO:0000266"/>
    <property type="project" value="RGD"/>
</dbReference>
<dbReference type="FunFam" id="2.30.31.10:FF:000001">
    <property type="entry name" value="Activated RNA polymerase II transcriptional coactivator p15"/>
    <property type="match status" value="1"/>
</dbReference>
<dbReference type="Gene3D" id="2.30.31.10">
    <property type="entry name" value="Transcriptional Coactivator Pc4, Chain A"/>
    <property type="match status" value="1"/>
</dbReference>
<dbReference type="InterPro" id="IPR003173">
    <property type="entry name" value="PC4_C"/>
</dbReference>
<dbReference type="InterPro" id="IPR009044">
    <property type="entry name" value="ssDNA-bd_transcriptional_reg"/>
</dbReference>
<dbReference type="InterPro" id="IPR045125">
    <property type="entry name" value="Sub1/Tcp4-like"/>
</dbReference>
<dbReference type="PANTHER" id="PTHR13215">
    <property type="entry name" value="RNA POLYMERASE II TRANSCRIPTIONAL COACTIVATOR"/>
    <property type="match status" value="1"/>
</dbReference>
<dbReference type="Pfam" id="PF02229">
    <property type="entry name" value="PC4"/>
    <property type="match status" value="1"/>
</dbReference>
<dbReference type="SUPFAM" id="SSF54447">
    <property type="entry name" value="ssDNA-binding transcriptional regulator domain"/>
    <property type="match status" value="1"/>
</dbReference>
<feature type="chain" id="PRO_0000045173" description="Activated RNA polymerase II transcriptional coactivator p15">
    <location>
        <begin position="1"/>
        <end position="127"/>
    </location>
</feature>
<feature type="region of interest" description="Disordered" evidence="4">
    <location>
        <begin position="1"/>
        <end position="62"/>
    </location>
</feature>
<feature type="region of interest" description="Regulatory" evidence="1">
    <location>
        <begin position="1"/>
        <end position="50"/>
    </location>
</feature>
<feature type="region of interest" description="Interaction with ssDNA" evidence="1">
    <location>
        <begin position="77"/>
        <end position="101"/>
    </location>
</feature>
<feature type="compositionally biased region" description="Low complexity" evidence="4">
    <location>
        <begin position="7"/>
        <end position="16"/>
    </location>
</feature>
<feature type="compositionally biased region" description="Basic and acidic residues" evidence="4">
    <location>
        <begin position="31"/>
        <end position="44"/>
    </location>
</feature>
<feature type="compositionally biased region" description="Low complexity" evidence="4">
    <location>
        <begin position="45"/>
        <end position="57"/>
    </location>
</feature>
<feature type="site" description="Cleavage" evidence="1">
    <location>
        <begin position="50"/>
        <end position="51"/>
    </location>
</feature>
<feature type="modified residue" description="Phosphoserine" evidence="3">
    <location>
        <position position="4"/>
    </location>
</feature>
<feature type="modified residue" description="Phosphoserine" evidence="6">
    <location>
        <position position="9"/>
    </location>
</feature>
<feature type="modified residue" description="Phosphoserine" evidence="3">
    <location>
        <position position="10"/>
    </location>
</feature>
<feature type="modified residue" description="Phosphoserine" evidence="3">
    <location>
        <position position="11"/>
    </location>
</feature>
<feature type="modified residue" description="Phosphoserine" evidence="3">
    <location>
        <position position="13"/>
    </location>
</feature>
<feature type="modified residue" description="Phosphoserine" evidence="3">
    <location>
        <position position="15"/>
    </location>
</feature>
<feature type="modified residue" description="Phosphoserine" evidence="6">
    <location>
        <position position="17"/>
    </location>
</feature>
<feature type="modified residue" description="Phosphoserine" evidence="6">
    <location>
        <position position="19"/>
    </location>
</feature>
<feature type="modified residue" description="N6-acetyllysine" evidence="3">
    <location>
        <position position="35"/>
    </location>
</feature>
<feature type="modified residue" description="N6-acetyllysine" evidence="2">
    <location>
        <position position="53"/>
    </location>
</feature>
<feature type="modified residue" description="Phosphoserine" evidence="3">
    <location>
        <position position="55"/>
    </location>
</feature>
<feature type="modified residue" description="Phosphoserine" evidence="3">
    <location>
        <position position="56"/>
    </location>
</feature>
<feature type="modified residue" description="Phosphoserine" evidence="3">
    <location>
        <position position="57"/>
    </location>
</feature>
<feature type="modified residue" description="Phosphoserine" evidence="3">
    <location>
        <position position="58"/>
    </location>
</feature>
<feature type="modified residue" description="N6-acetyllysine; alternate" evidence="3">
    <location>
        <position position="68"/>
    </location>
</feature>
<feature type="modified residue" description="Phosphoserine" evidence="3">
    <location>
        <position position="118"/>
    </location>
</feature>
<feature type="cross-link" description="Glycyl lysine isopeptide (Lys-Gly) (interchain with G-Cter in SUMO1); alternate" evidence="3">
    <location>
        <position position="68"/>
    </location>
</feature>
<feature type="cross-link" description="Glycyl lysine isopeptide (Lys-Gly) (interchain with G-Cter in SUMO2); alternate" evidence="3">
    <location>
        <position position="68"/>
    </location>
</feature>
<feature type="sequence conflict" description="In Ref. 2; AAA41758." evidence="5" ref="2">
    <original>G</original>
    <variation>S</variation>
    <location>
        <position position="43"/>
    </location>
</feature>
<feature type="sequence conflict" description="In Ref. 2; AAA41758." evidence="5" ref="2">
    <original>G</original>
    <variation>R</variation>
    <location>
        <position position="99"/>
    </location>
</feature>
<proteinExistence type="evidence at protein level"/>
<reference key="1">
    <citation type="journal article" date="2004" name="Genome Res.">
        <title>The status, quality, and expansion of the NIH full-length cDNA project: the Mammalian Gene Collection (MGC).</title>
        <authorList>
            <consortium name="The MGC Project Team"/>
        </authorList>
    </citation>
    <scope>NUCLEOTIDE SEQUENCE [LARGE SCALE MRNA]</scope>
    <source>
        <tissue>Spleen</tissue>
    </source>
</reference>
<reference key="2">
    <citation type="journal article" date="1984" name="Biochem. Biophys. Res. Commun.">
        <title>Molecular cloning and characterization of a cDNA clone for a protein specifically expressed in embryo as well as in a chemically induced pancreatic B cell tumor of rat.</title>
        <authorList>
            <person name="Soma G."/>
            <person name="Kitahara N."/>
            <person name="Andoh T."/>
        </authorList>
    </citation>
    <scope>NUCLEOTIDE SEQUENCE [MRNA] OF 9-127</scope>
</reference>
<reference key="3">
    <citation type="journal article" date="2012" name="Nat. Commun.">
        <title>Quantitative maps of protein phosphorylation sites across 14 different rat organs and tissues.</title>
        <authorList>
            <person name="Lundby A."/>
            <person name="Secher A."/>
            <person name="Lage K."/>
            <person name="Nordsborg N.B."/>
            <person name="Dmytriyev A."/>
            <person name="Lundby C."/>
            <person name="Olsen J.V."/>
        </authorList>
    </citation>
    <scope>PHOSPHORYLATION [LARGE SCALE ANALYSIS] AT SER-9; SER-17 AND SER-19</scope>
    <scope>IDENTIFICATION BY MASS SPECTROMETRY [LARGE SCALE ANALYSIS]</scope>
</reference>
<sequence>MPKSKELVSSSSSGSDSDSEVEKKLKRKKQVVPEKPVKKQKPGESSRALASSKQSSSSRDDNMFQIGKMRYVSVRDFKGKILIDIREYWMDSEGEMKPGRKGISLNMEQWSQLKEQISDIDDAVRKL</sequence>
<comment type="function">
    <text evidence="1">General coactivator that functions cooperatively with TAFs and mediates functional interactions between upstream activators and the general transcriptional machinery. May be involved in stabilizing the multiprotein transcription complex. Binds single-stranded DNA. Also binds, in vitro, non-specifically to double-stranded DNA (ds DNA) (By similarity).</text>
</comment>
<comment type="subunit">
    <text evidence="1">Homodimer. Interacts with CSTF2 (By similarity).</text>
</comment>
<comment type="subcellular location">
    <subcellularLocation>
        <location evidence="1">Nucleus</location>
    </subcellularLocation>
</comment>
<comment type="PTM">
    <text evidence="1">Activity is controlled by protein kinases that target the regulatory region. Phosphorylation inactivates both ds DNA-binding and cofactor function, but does not affect binding to ssDNA (By similarity).</text>
</comment>
<comment type="similarity">
    <text evidence="5">Belongs to the transcriptional coactivator PC4 family.</text>
</comment>
<keyword id="KW-0007">Acetylation</keyword>
<keyword id="KW-0010">Activator</keyword>
<keyword id="KW-0238">DNA-binding</keyword>
<keyword id="KW-1017">Isopeptide bond</keyword>
<keyword id="KW-0539">Nucleus</keyword>
<keyword id="KW-0597">Phosphoprotein</keyword>
<keyword id="KW-1185">Reference proteome</keyword>
<keyword id="KW-0804">Transcription</keyword>
<keyword id="KW-0805">Transcription regulation</keyword>
<keyword id="KW-0832">Ubl conjugation</keyword>
<accession>Q63396</accession>
<accession>Q5M805</accession>
<evidence type="ECO:0000250" key="1"/>
<evidence type="ECO:0000250" key="2">
    <source>
        <dbReference type="UniProtKB" id="P11031"/>
    </source>
</evidence>
<evidence type="ECO:0000250" key="3">
    <source>
        <dbReference type="UniProtKB" id="P53999"/>
    </source>
</evidence>
<evidence type="ECO:0000256" key="4">
    <source>
        <dbReference type="SAM" id="MobiDB-lite"/>
    </source>
</evidence>
<evidence type="ECO:0000305" key="5"/>
<evidence type="ECO:0007744" key="6">
    <source>
    </source>
</evidence>
<name>TCP4_RAT</name>
<organism>
    <name type="scientific">Rattus norvegicus</name>
    <name type="common">Rat</name>
    <dbReference type="NCBI Taxonomy" id="10116"/>
    <lineage>
        <taxon>Eukaryota</taxon>
        <taxon>Metazoa</taxon>
        <taxon>Chordata</taxon>
        <taxon>Craniata</taxon>
        <taxon>Vertebrata</taxon>
        <taxon>Euteleostomi</taxon>
        <taxon>Mammalia</taxon>
        <taxon>Eutheria</taxon>
        <taxon>Euarchontoglires</taxon>
        <taxon>Glires</taxon>
        <taxon>Rodentia</taxon>
        <taxon>Myomorpha</taxon>
        <taxon>Muroidea</taxon>
        <taxon>Muridae</taxon>
        <taxon>Murinae</taxon>
        <taxon>Rattus</taxon>
    </lineage>
</organism>
<protein>
    <recommendedName>
        <fullName>Activated RNA polymerase II transcriptional coactivator p15</fullName>
    </recommendedName>
    <alternativeName>
        <fullName>Positive cofactor 4</fullName>
        <shortName>PC4</shortName>
    </alternativeName>
    <alternativeName>
        <fullName>SUB1 homolog</fullName>
    </alternativeName>
    <alternativeName>
        <fullName>p14</fullName>
    </alternativeName>
</protein>